<gene>
    <name type="primary">zraS</name>
    <name type="synonym">hydH</name>
</gene>
<evidence type="ECO:0000250" key="1">
    <source>
        <dbReference type="UniProtKB" id="P14377"/>
    </source>
</evidence>
<evidence type="ECO:0000255" key="2"/>
<evidence type="ECO:0000255" key="3">
    <source>
        <dbReference type="PROSITE-ProRule" id="PRU00107"/>
    </source>
</evidence>
<evidence type="ECO:0000305" key="4"/>
<reference key="1">
    <citation type="journal article" date="2001" name="J. Mol. Biol.">
        <title>The hydH/G genes from Escherichia coli code for a zinc and lead responsive two-component regulatory system.</title>
        <authorList>
            <person name="Leonhartsberger S."/>
            <person name="Huber A."/>
            <person name="Lottspeich F."/>
            <person name="Boeck A."/>
        </authorList>
    </citation>
    <scope>NUCLEOTIDE SEQUENCE [GENOMIC DNA]</scope>
    <source>
        <strain>M5a1</strain>
    </source>
</reference>
<feature type="chain" id="PRO_0000074911" description="Sensor histidine kinase ZraS">
    <location>
        <begin position="1"/>
        <end position="462"/>
    </location>
</feature>
<feature type="topological domain" description="Cytoplasmic" evidence="4">
    <location>
        <begin position="1"/>
        <end position="14"/>
    </location>
</feature>
<feature type="transmembrane region" description="Helical" evidence="2">
    <location>
        <begin position="15"/>
        <end position="35"/>
    </location>
</feature>
<feature type="topological domain" description="Periplasmic" evidence="4">
    <location>
        <begin position="36"/>
        <end position="197"/>
    </location>
</feature>
<feature type="transmembrane region" description="Helical" evidence="2">
    <location>
        <begin position="198"/>
        <end position="218"/>
    </location>
</feature>
<feature type="topological domain" description="Cytoplasmic" evidence="4">
    <location>
        <begin position="219"/>
        <end position="462"/>
    </location>
</feature>
<feature type="domain" description="Histidine kinase" evidence="3">
    <location>
        <begin position="247"/>
        <end position="455"/>
    </location>
</feature>
<feature type="modified residue" description="Phosphohistidine; by autocatalysis" evidence="3">
    <location>
        <position position="250"/>
    </location>
</feature>
<comment type="function">
    <text evidence="1">Part of the Zra signaling pathway, an envelope stress response (ESR) system composed of the periplasmic accessory protein ZraP, the histidine kinase ZraS and the transcriptional regulator ZraR. The ZraPSR system contributes to antibiotic resistance and is important for membrane integrity in the presence of membrane-targeting biocides. ZraS is a member of the two-component regulatory system ZraS/ZraR. Functions as a membrane-associated sensor kinase that phosphorylates ZraR in response to high concentrations of Zn(2+) or Pb(2+) in the medium.</text>
</comment>
<comment type="catalytic activity">
    <reaction evidence="1">
        <text>ATP + protein L-histidine = ADP + protein N-phospho-L-histidine.</text>
        <dbReference type="EC" id="2.7.13.3"/>
    </reaction>
</comment>
<comment type="activity regulation">
    <text evidence="1">Activity of the ZraS/ZraR two-component system is repressed by the zinc-bound form of ZraP, which probably interacts with the periplasmic region of ZraS.</text>
</comment>
<comment type="subcellular location">
    <subcellularLocation>
        <location evidence="1">Cell inner membrane</location>
        <topology evidence="2">Multi-pass membrane protein</topology>
    </subcellularLocation>
</comment>
<comment type="PTM">
    <text evidence="1">Autophosphorylated.</text>
</comment>
<protein>
    <recommendedName>
        <fullName evidence="1">Sensor histidine kinase ZraS</fullName>
        <ecNumber evidence="1">2.7.13.3</ecNumber>
    </recommendedName>
</protein>
<name>ZRAS_KLEOX</name>
<proteinExistence type="inferred from homology"/>
<keyword id="KW-0067">ATP-binding</keyword>
<keyword id="KW-0997">Cell inner membrane</keyword>
<keyword id="KW-1003">Cell membrane</keyword>
<keyword id="KW-0418">Kinase</keyword>
<keyword id="KW-0472">Membrane</keyword>
<keyword id="KW-0547">Nucleotide-binding</keyword>
<keyword id="KW-0597">Phosphoprotein</keyword>
<keyword id="KW-0346">Stress response</keyword>
<keyword id="KW-0808">Transferase</keyword>
<keyword id="KW-0812">Transmembrane</keyword>
<keyword id="KW-1133">Transmembrane helix</keyword>
<keyword id="KW-0902">Two-component regulatory system</keyword>
<keyword id="KW-0862">Zinc</keyword>
<dbReference type="EC" id="2.7.13.3" evidence="1"/>
<dbReference type="EMBL" id="AF305914">
    <property type="protein sequence ID" value="AAG59806.1"/>
    <property type="molecule type" value="Genomic_DNA"/>
</dbReference>
<dbReference type="SMR" id="Q9APE0"/>
<dbReference type="PATRIC" id="fig|571.110.peg.237"/>
<dbReference type="eggNOG" id="COG4191">
    <property type="taxonomic scope" value="Bacteria"/>
</dbReference>
<dbReference type="BRENDA" id="2.7.13.3">
    <property type="organism ID" value="2811"/>
</dbReference>
<dbReference type="GO" id="GO:0005886">
    <property type="term" value="C:plasma membrane"/>
    <property type="evidence" value="ECO:0007669"/>
    <property type="project" value="UniProtKB-SubCell"/>
</dbReference>
<dbReference type="GO" id="GO:0005524">
    <property type="term" value="F:ATP binding"/>
    <property type="evidence" value="ECO:0007669"/>
    <property type="project" value="UniProtKB-KW"/>
</dbReference>
<dbReference type="GO" id="GO:0000155">
    <property type="term" value="F:phosphorelay sensor kinase activity"/>
    <property type="evidence" value="ECO:0007669"/>
    <property type="project" value="InterPro"/>
</dbReference>
<dbReference type="CDD" id="cd00082">
    <property type="entry name" value="HisKA"/>
    <property type="match status" value="1"/>
</dbReference>
<dbReference type="Gene3D" id="1.10.287.130">
    <property type="match status" value="1"/>
</dbReference>
<dbReference type="Gene3D" id="3.30.565.10">
    <property type="entry name" value="Histidine kinase-like ATPase, C-terminal domain"/>
    <property type="match status" value="1"/>
</dbReference>
<dbReference type="Gene3D" id="3.30.450.20">
    <property type="entry name" value="PAS domain"/>
    <property type="match status" value="1"/>
</dbReference>
<dbReference type="InterPro" id="IPR036890">
    <property type="entry name" value="HATPase_C_sf"/>
</dbReference>
<dbReference type="InterPro" id="IPR005467">
    <property type="entry name" value="His_kinase_dom"/>
</dbReference>
<dbReference type="InterPro" id="IPR003661">
    <property type="entry name" value="HisK_dim/P_dom"/>
</dbReference>
<dbReference type="InterPro" id="IPR036097">
    <property type="entry name" value="HisK_dim/P_sf"/>
</dbReference>
<dbReference type="InterPro" id="IPR033463">
    <property type="entry name" value="sCache_3"/>
</dbReference>
<dbReference type="InterPro" id="IPR029151">
    <property type="entry name" value="Sensor-like_sf"/>
</dbReference>
<dbReference type="InterPro" id="IPR004358">
    <property type="entry name" value="Sig_transdc_His_kin-like_C"/>
</dbReference>
<dbReference type="NCBIfam" id="NF007688">
    <property type="entry name" value="PRK10364.1"/>
    <property type="match status" value="1"/>
</dbReference>
<dbReference type="PANTHER" id="PTHR43065">
    <property type="entry name" value="SENSOR HISTIDINE KINASE"/>
    <property type="match status" value="1"/>
</dbReference>
<dbReference type="PANTHER" id="PTHR43065:SF54">
    <property type="entry name" value="SENSOR PROTEIN ZRAS"/>
    <property type="match status" value="1"/>
</dbReference>
<dbReference type="Pfam" id="PF02518">
    <property type="entry name" value="HATPase_c"/>
    <property type="match status" value="1"/>
</dbReference>
<dbReference type="Pfam" id="PF00512">
    <property type="entry name" value="HisKA"/>
    <property type="match status" value="1"/>
</dbReference>
<dbReference type="Pfam" id="PF17203">
    <property type="entry name" value="sCache_3_2"/>
    <property type="match status" value="1"/>
</dbReference>
<dbReference type="PRINTS" id="PR00344">
    <property type="entry name" value="BCTRLSENSOR"/>
</dbReference>
<dbReference type="SMART" id="SM00387">
    <property type="entry name" value="HATPase_c"/>
    <property type="match status" value="1"/>
</dbReference>
<dbReference type="SMART" id="SM00388">
    <property type="entry name" value="HisKA"/>
    <property type="match status" value="1"/>
</dbReference>
<dbReference type="SUPFAM" id="SSF55874">
    <property type="entry name" value="ATPase domain of HSP90 chaperone/DNA topoisomerase II/histidine kinase"/>
    <property type="match status" value="1"/>
</dbReference>
<dbReference type="SUPFAM" id="SSF47384">
    <property type="entry name" value="Homodimeric domain of signal transducing histidine kinase"/>
    <property type="match status" value="1"/>
</dbReference>
<dbReference type="SUPFAM" id="SSF103190">
    <property type="entry name" value="Sensory domain-like"/>
    <property type="match status" value="1"/>
</dbReference>
<dbReference type="PROSITE" id="PS50109">
    <property type="entry name" value="HIS_KIN"/>
    <property type="match status" value="1"/>
</dbReference>
<sequence length="462" mass="51201">MNVMRLSKDSVAVGLSWLLTGLILLLVCLFSALIVRDYGRENEAARQTIQEKGSVLIRALESGTRVGMGMRMHHSQLQTLLEEMAWQPGVLWFAVTDENGKIIAHSDPRRVGESLYPASTLRELNIGSEERWRRLEQPEPALEIYRQFRPLNGGGHHMRMMMRRESADLRNQAPQVIFIAFDTRELDADHARGLRNMVIMLCAAGVVMAATVLAQFWFRRYQRSRKQLQEATARKEKLVALGHLAAGVAHEIRNPLSSIKGLAKYFAERTPADGEAHQLALVMAREADRLNRVVSELLELVRPAHLKYQSVDLNEVITHSLQLVSQDAASRAISLTFTAQPALCRIQADPDRLKQVLLNLYLNAVHAIGREGVITVAVRECGDGRVKVSVADSGKGMTAEQLQAIFTPYFSTKADGTGLGLAVVQNIVEQHGGTIDAESAPGKGALFTFYLPVNGQQKDEQG</sequence>
<organism>
    <name type="scientific">Klebsiella oxytoca</name>
    <dbReference type="NCBI Taxonomy" id="571"/>
    <lineage>
        <taxon>Bacteria</taxon>
        <taxon>Pseudomonadati</taxon>
        <taxon>Pseudomonadota</taxon>
        <taxon>Gammaproteobacteria</taxon>
        <taxon>Enterobacterales</taxon>
        <taxon>Enterobacteriaceae</taxon>
        <taxon>Klebsiella/Raoultella group</taxon>
        <taxon>Klebsiella</taxon>
    </lineage>
</organism>
<accession>Q9APE0</accession>